<dbReference type="EMBL" id="CP000948">
    <property type="protein sequence ID" value="ACB04361.1"/>
    <property type="molecule type" value="Genomic_DNA"/>
</dbReference>
<dbReference type="SMR" id="B1X6F1"/>
<dbReference type="KEGG" id="ecd:ECDH10B_3474"/>
<dbReference type="HOGENOM" id="CLU_135723_6_2_6"/>
<dbReference type="GO" id="GO:0005737">
    <property type="term" value="C:cytoplasm"/>
    <property type="evidence" value="ECO:0007669"/>
    <property type="project" value="UniProtKB-ARBA"/>
</dbReference>
<dbReference type="GO" id="GO:1990904">
    <property type="term" value="C:ribonucleoprotein complex"/>
    <property type="evidence" value="ECO:0007669"/>
    <property type="project" value="UniProtKB-KW"/>
</dbReference>
<dbReference type="GO" id="GO:0005840">
    <property type="term" value="C:ribosome"/>
    <property type="evidence" value="ECO:0007669"/>
    <property type="project" value="UniProtKB-KW"/>
</dbReference>
<dbReference type="GO" id="GO:0003735">
    <property type="term" value="F:structural constituent of ribosome"/>
    <property type="evidence" value="ECO:0007669"/>
    <property type="project" value="InterPro"/>
</dbReference>
<dbReference type="GO" id="GO:0006412">
    <property type="term" value="P:translation"/>
    <property type="evidence" value="ECO:0007669"/>
    <property type="project" value="UniProtKB-UniRule"/>
</dbReference>
<dbReference type="HAMAP" id="MF_00251">
    <property type="entry name" value="Ribosomal_bL36"/>
    <property type="match status" value="1"/>
</dbReference>
<dbReference type="InterPro" id="IPR000473">
    <property type="entry name" value="Ribosomal_bL36"/>
</dbReference>
<dbReference type="InterPro" id="IPR035977">
    <property type="entry name" value="Ribosomal_bL36_sp"/>
</dbReference>
<dbReference type="NCBIfam" id="TIGR01022">
    <property type="entry name" value="rpmJ_bact"/>
    <property type="match status" value="1"/>
</dbReference>
<dbReference type="PANTHER" id="PTHR42888">
    <property type="entry name" value="50S RIBOSOMAL PROTEIN L36, CHLOROPLASTIC"/>
    <property type="match status" value="1"/>
</dbReference>
<dbReference type="PANTHER" id="PTHR42888:SF1">
    <property type="entry name" value="LARGE RIBOSOMAL SUBUNIT PROTEIN BL36C"/>
    <property type="match status" value="1"/>
</dbReference>
<dbReference type="Pfam" id="PF00444">
    <property type="entry name" value="Ribosomal_L36"/>
    <property type="match status" value="1"/>
</dbReference>
<dbReference type="SUPFAM" id="SSF57840">
    <property type="entry name" value="Ribosomal protein L36"/>
    <property type="match status" value="1"/>
</dbReference>
<dbReference type="PROSITE" id="PS00828">
    <property type="entry name" value="RIBOSOMAL_L36"/>
    <property type="match status" value="1"/>
</dbReference>
<protein>
    <recommendedName>
        <fullName evidence="1">Large ribosomal subunit protein bL36A</fullName>
    </recommendedName>
    <alternativeName>
        <fullName evidence="2">50S ribosomal protein L36 1</fullName>
    </alternativeName>
</protein>
<organism>
    <name type="scientific">Escherichia coli (strain K12 / DH10B)</name>
    <dbReference type="NCBI Taxonomy" id="316385"/>
    <lineage>
        <taxon>Bacteria</taxon>
        <taxon>Pseudomonadati</taxon>
        <taxon>Pseudomonadota</taxon>
        <taxon>Gammaproteobacteria</taxon>
        <taxon>Enterobacterales</taxon>
        <taxon>Enterobacteriaceae</taxon>
        <taxon>Escherichia</taxon>
    </lineage>
</organism>
<reference key="1">
    <citation type="journal article" date="2008" name="J. Bacteriol.">
        <title>The complete genome sequence of Escherichia coli DH10B: insights into the biology of a laboratory workhorse.</title>
        <authorList>
            <person name="Durfee T."/>
            <person name="Nelson R."/>
            <person name="Baldwin S."/>
            <person name="Plunkett G. III"/>
            <person name="Burland V."/>
            <person name="Mau B."/>
            <person name="Petrosino J.F."/>
            <person name="Qin X."/>
            <person name="Muzny D.M."/>
            <person name="Ayele M."/>
            <person name="Gibbs R.A."/>
            <person name="Csorgo B."/>
            <person name="Posfai G."/>
            <person name="Weinstock G.M."/>
            <person name="Blattner F.R."/>
        </authorList>
    </citation>
    <scope>NUCLEOTIDE SEQUENCE [LARGE SCALE GENOMIC DNA]</scope>
    <source>
        <strain>K12 / DH10B</strain>
    </source>
</reference>
<keyword id="KW-0687">Ribonucleoprotein</keyword>
<keyword id="KW-0689">Ribosomal protein</keyword>
<feature type="chain" id="PRO_0000344670" description="Large ribosomal subunit protein bL36A">
    <location>
        <begin position="1"/>
        <end position="38"/>
    </location>
</feature>
<evidence type="ECO:0000255" key="1">
    <source>
        <dbReference type="HAMAP-Rule" id="MF_00251"/>
    </source>
</evidence>
<evidence type="ECO:0000305" key="2"/>
<accession>B1X6F1</accession>
<sequence length="38" mass="4364">MKVRASVKKLCRNCKIVKRDGVIRVICSAEPKHKQRQG</sequence>
<name>RL361_ECODH</name>
<gene>
    <name evidence="1" type="primary">rpmJ1</name>
    <name type="ordered locus">ECDH10B_3474</name>
</gene>
<comment type="similarity">
    <text evidence="1">Belongs to the bacterial ribosomal protein bL36 family.</text>
</comment>
<proteinExistence type="inferred from homology"/>